<gene>
    <name evidence="2" type="primary">crl</name>
    <name type="ordered locus">SDY_0477</name>
</gene>
<accession>Q32J23</accession>
<dbReference type="EMBL" id="CP000034">
    <property type="protein sequence ID" value="ABB60684.1"/>
    <property type="molecule type" value="Genomic_DNA"/>
</dbReference>
<dbReference type="RefSeq" id="WP_000174704.1">
    <property type="nucleotide sequence ID" value="NC_007606.1"/>
</dbReference>
<dbReference type="RefSeq" id="YP_402173.1">
    <property type="nucleotide sequence ID" value="NC_007606.1"/>
</dbReference>
<dbReference type="SMR" id="Q32J23"/>
<dbReference type="STRING" id="300267.SDY_0477"/>
<dbReference type="EnsemblBacteria" id="ABB60684">
    <property type="protein sequence ID" value="ABB60684"/>
    <property type="gene ID" value="SDY_0477"/>
</dbReference>
<dbReference type="KEGG" id="sdy:SDY_0477"/>
<dbReference type="PATRIC" id="fig|300267.13.peg.562"/>
<dbReference type="HOGENOM" id="CLU_136773_0_0_6"/>
<dbReference type="Proteomes" id="UP000002716">
    <property type="component" value="Chromosome"/>
</dbReference>
<dbReference type="GO" id="GO:0005737">
    <property type="term" value="C:cytoplasm"/>
    <property type="evidence" value="ECO:0007669"/>
    <property type="project" value="UniProtKB-SubCell"/>
</dbReference>
<dbReference type="GO" id="GO:0045893">
    <property type="term" value="P:positive regulation of DNA-templated transcription"/>
    <property type="evidence" value="ECO:0007669"/>
    <property type="project" value="UniProtKB-UniRule"/>
</dbReference>
<dbReference type="FunFam" id="3.30.310.230:FF:000001">
    <property type="entry name" value="Sigma factor-binding protein Crl"/>
    <property type="match status" value="1"/>
</dbReference>
<dbReference type="Gene3D" id="3.30.310.230">
    <property type="entry name" value="Sigma factor-binding protein Crl monomer"/>
    <property type="match status" value="1"/>
</dbReference>
<dbReference type="HAMAP" id="MF_01178">
    <property type="entry name" value="Crl"/>
    <property type="match status" value="1"/>
</dbReference>
<dbReference type="InterPro" id="IPR009986">
    <property type="entry name" value="Tscrpt_reg_Crl"/>
</dbReference>
<dbReference type="InterPro" id="IPR038208">
    <property type="entry name" value="Tscrpt_reg_Crl_sf"/>
</dbReference>
<dbReference type="NCBIfam" id="NF008217">
    <property type="entry name" value="PRK10984.1"/>
    <property type="match status" value="1"/>
</dbReference>
<dbReference type="Pfam" id="PF07417">
    <property type="entry name" value="Crl"/>
    <property type="match status" value="1"/>
</dbReference>
<protein>
    <recommendedName>
        <fullName evidence="2">Sigma factor-binding protein Crl</fullName>
    </recommendedName>
</protein>
<proteinExistence type="inferred from homology"/>
<keyword id="KW-0010">Activator</keyword>
<keyword id="KW-0175">Coiled coil</keyword>
<keyword id="KW-0963">Cytoplasm</keyword>
<keyword id="KW-1185">Reference proteome</keyword>
<keyword id="KW-0804">Transcription</keyword>
<keyword id="KW-0805">Transcription regulation</keyword>
<evidence type="ECO:0000250" key="1"/>
<evidence type="ECO:0000255" key="2">
    <source>
        <dbReference type="HAMAP-Rule" id="MF_01178"/>
    </source>
</evidence>
<organism>
    <name type="scientific">Shigella dysenteriae serotype 1 (strain Sd197)</name>
    <dbReference type="NCBI Taxonomy" id="300267"/>
    <lineage>
        <taxon>Bacteria</taxon>
        <taxon>Pseudomonadati</taxon>
        <taxon>Pseudomonadota</taxon>
        <taxon>Gammaproteobacteria</taxon>
        <taxon>Enterobacterales</taxon>
        <taxon>Enterobacteriaceae</taxon>
        <taxon>Shigella</taxon>
    </lineage>
</organism>
<sequence length="133" mass="15682">MTLPSGYPKSRLIKKFTALGPYIREGKCEDNRFFFDCLAVCVNVKPAPEVREFWGWWMELEAQESRFTYSYQFGLFDKAGDWKSVPVKDTEVVERLEHTLREFHEKLRELLTTLNLKLEPADDFRDEPVKLTA</sequence>
<name>CRL_SHIDS</name>
<reference key="1">
    <citation type="journal article" date="2005" name="Nucleic Acids Res.">
        <title>Genome dynamics and diversity of Shigella species, the etiologic agents of bacillary dysentery.</title>
        <authorList>
            <person name="Yang F."/>
            <person name="Yang J."/>
            <person name="Zhang X."/>
            <person name="Chen L."/>
            <person name="Jiang Y."/>
            <person name="Yan Y."/>
            <person name="Tang X."/>
            <person name="Wang J."/>
            <person name="Xiong Z."/>
            <person name="Dong J."/>
            <person name="Xue Y."/>
            <person name="Zhu Y."/>
            <person name="Xu X."/>
            <person name="Sun L."/>
            <person name="Chen S."/>
            <person name="Nie H."/>
            <person name="Peng J."/>
            <person name="Xu J."/>
            <person name="Wang Y."/>
            <person name="Yuan Z."/>
            <person name="Wen Y."/>
            <person name="Yao Z."/>
            <person name="Shen Y."/>
            <person name="Qiang B."/>
            <person name="Hou Y."/>
            <person name="Yu J."/>
            <person name="Jin Q."/>
        </authorList>
    </citation>
    <scope>NUCLEOTIDE SEQUENCE [LARGE SCALE GENOMIC DNA]</scope>
    <source>
        <strain>Sd197</strain>
    </source>
</reference>
<feature type="initiator methionine" description="Removed" evidence="1">
    <location>
        <position position="1"/>
    </location>
</feature>
<feature type="chain" id="PRO_0000268906" description="Sigma factor-binding protein Crl">
    <location>
        <begin position="2"/>
        <end position="133"/>
    </location>
</feature>
<feature type="region of interest" description="Essential for activity" evidence="2">
    <location>
        <begin position="99"/>
        <end position="122"/>
    </location>
</feature>
<feature type="coiled-coil region" evidence="2">
    <location>
        <begin position="90"/>
        <end position="116"/>
    </location>
</feature>
<comment type="function">
    <text evidence="2">Binds to the sigma-S subunit of RNA polymerase, activating expression of sigma-S-regulated genes. Stimulates RNA polymerase holoenzyme formation and may bind to several other sigma factors, such as sigma-70 and sigma-32.</text>
</comment>
<comment type="subcellular location">
    <subcellularLocation>
        <location evidence="2">Cytoplasm</location>
    </subcellularLocation>
</comment>
<comment type="similarity">
    <text evidence="2">Belongs to the Crl family.</text>
</comment>